<dbReference type="EC" id="6.3.1.19" evidence="1"/>
<dbReference type="EMBL" id="CP000580">
    <property type="protein sequence ID" value="ABN98288.1"/>
    <property type="status" value="ALT_INIT"/>
    <property type="molecule type" value="Genomic_DNA"/>
</dbReference>
<dbReference type="SMR" id="A3PZG1"/>
<dbReference type="KEGG" id="mjl:Mjls_2504"/>
<dbReference type="HOGENOM" id="CLU_040524_0_1_11"/>
<dbReference type="BioCyc" id="MSP164757:G1G8C-2523-MONOMER"/>
<dbReference type="UniPathway" id="UPA00997"/>
<dbReference type="UniPathway" id="UPA00998"/>
<dbReference type="GO" id="GO:0005524">
    <property type="term" value="F:ATP binding"/>
    <property type="evidence" value="ECO:0007669"/>
    <property type="project" value="UniProtKB-UniRule"/>
</dbReference>
<dbReference type="GO" id="GO:0016879">
    <property type="term" value="F:ligase activity, forming carbon-nitrogen bonds"/>
    <property type="evidence" value="ECO:0007669"/>
    <property type="project" value="InterPro"/>
</dbReference>
<dbReference type="GO" id="GO:0000287">
    <property type="term" value="F:magnesium ion binding"/>
    <property type="evidence" value="ECO:0007669"/>
    <property type="project" value="UniProtKB-UniRule"/>
</dbReference>
<dbReference type="GO" id="GO:0019787">
    <property type="term" value="F:ubiquitin-like protein transferase activity"/>
    <property type="evidence" value="ECO:0007669"/>
    <property type="project" value="UniProtKB-UniRule"/>
</dbReference>
<dbReference type="GO" id="GO:0019941">
    <property type="term" value="P:modification-dependent protein catabolic process"/>
    <property type="evidence" value="ECO:0007669"/>
    <property type="project" value="UniProtKB-UniRule"/>
</dbReference>
<dbReference type="GO" id="GO:0010498">
    <property type="term" value="P:proteasomal protein catabolic process"/>
    <property type="evidence" value="ECO:0007669"/>
    <property type="project" value="UniProtKB-UniRule"/>
</dbReference>
<dbReference type="GO" id="GO:0070490">
    <property type="term" value="P:protein pupylation"/>
    <property type="evidence" value="ECO:0007669"/>
    <property type="project" value="UniProtKB-UniRule"/>
</dbReference>
<dbReference type="HAMAP" id="MF_02111">
    <property type="entry name" value="Pup_ligase"/>
    <property type="match status" value="1"/>
</dbReference>
<dbReference type="InterPro" id="IPR022279">
    <property type="entry name" value="Pup_ligase"/>
</dbReference>
<dbReference type="InterPro" id="IPR004347">
    <property type="entry name" value="Pup_ligase/deamidase"/>
</dbReference>
<dbReference type="NCBIfam" id="TIGR03686">
    <property type="entry name" value="pupylate_PafA"/>
    <property type="match status" value="1"/>
</dbReference>
<dbReference type="PANTHER" id="PTHR42307">
    <property type="entry name" value="PUP DEAMIDASE/DEPUPYLASE"/>
    <property type="match status" value="1"/>
</dbReference>
<dbReference type="PANTHER" id="PTHR42307:SF3">
    <property type="entry name" value="PUP--PROTEIN LIGASE"/>
    <property type="match status" value="1"/>
</dbReference>
<dbReference type="Pfam" id="PF03136">
    <property type="entry name" value="Pup_ligase"/>
    <property type="match status" value="1"/>
</dbReference>
<dbReference type="PIRSF" id="PIRSF018077">
    <property type="entry name" value="UCP018077"/>
    <property type="match status" value="1"/>
</dbReference>
<keyword id="KW-0067">ATP-binding</keyword>
<keyword id="KW-0436">Ligase</keyword>
<keyword id="KW-0460">Magnesium</keyword>
<keyword id="KW-0479">Metal-binding</keyword>
<keyword id="KW-0547">Nucleotide-binding</keyword>
<keyword id="KW-0833">Ubl conjugation pathway</keyword>
<reference key="1">
    <citation type="submission" date="2007-02" db="EMBL/GenBank/DDBJ databases">
        <title>Complete sequence of Mycobacterium sp. JLS.</title>
        <authorList>
            <consortium name="US DOE Joint Genome Institute"/>
            <person name="Copeland A."/>
            <person name="Lucas S."/>
            <person name="Lapidus A."/>
            <person name="Barry K."/>
            <person name="Detter J.C."/>
            <person name="Glavina del Rio T."/>
            <person name="Hammon N."/>
            <person name="Israni S."/>
            <person name="Dalin E."/>
            <person name="Tice H."/>
            <person name="Pitluck S."/>
            <person name="Chain P."/>
            <person name="Malfatti S."/>
            <person name="Shin M."/>
            <person name="Vergez L."/>
            <person name="Schmutz J."/>
            <person name="Larimer F."/>
            <person name="Land M."/>
            <person name="Hauser L."/>
            <person name="Kyrpides N."/>
            <person name="Mikhailova N."/>
            <person name="Miller C.D."/>
            <person name="Anderson A.J."/>
            <person name="Sims R.C."/>
            <person name="Richardson P."/>
        </authorList>
    </citation>
    <scope>NUCLEOTIDE SEQUENCE [LARGE SCALE GENOMIC DNA]</scope>
    <source>
        <strain>JLS</strain>
    </source>
</reference>
<protein>
    <recommendedName>
        <fullName evidence="1">Pup--protein ligase</fullName>
        <ecNumber evidence="1">6.3.1.19</ecNumber>
    </recommendedName>
    <alternativeName>
        <fullName evidence="1">Proteasome accessory factor A</fullName>
    </alternativeName>
    <alternativeName>
        <fullName evidence="1">Pup-conjugating enzyme</fullName>
    </alternativeName>
</protein>
<evidence type="ECO:0000255" key="1">
    <source>
        <dbReference type="HAMAP-Rule" id="MF_02111"/>
    </source>
</evidence>
<evidence type="ECO:0000305" key="2"/>
<sequence length="452" mass="51389">MQRRIMGIETEFGVTCTFHGHRRLSPDEVARYLFRRVVSWGRSSNVFLRNGARLYLDVGSHPEYATAECDNLIQLVTHDRAGERVLEDLLIDAEQRLADEGIGGDIYLFKNNTDSAGNSYGCHENYLIVRAGEFSRISDVLLPFLVTRQLICGAGKVLQTPKAATFCLSQRAEHIWEGVSSATTRSRPIINTRDEPHADAEKYRRLHVIVGDSNMCESTTMLKVGTASLVLEMIEAGVPFRDFSLDNPIRAIREVSHDLTGRRPVRLAGGRQASALDIQREYYSRAVDYLQTREPNSQIEQVVDLWGRQLDAVESQDFAKVDTEIDWVIKRKLFQRYQDRYNMELSDPKISQLDLAYHDIKRGRGVFDLLQRKGLAARITTDEEIDAAVDTPPQTTRAKLRGEFISAAQEAGRDFTVDWVHLKLNDQAQRTVLCKDPFRSVDERVKRLIASM</sequence>
<comment type="function">
    <text evidence="1">Catalyzes the covalent attachment of the prokaryotic ubiquitin-like protein modifier Pup to the proteasomal substrate proteins, thereby targeting them for proteasomal degradation. This tagging system is termed pupylation. The ligation reaction involves the side-chain carboxylate of the C-terminal glutamate of Pup and the side-chain amino group of a substrate lysine.</text>
</comment>
<comment type="catalytic activity">
    <reaction evidence="1">
        <text>ATP + [prokaryotic ubiquitin-like protein]-L-glutamate + [protein]-L-lysine = ADP + phosphate + N(6)-([prokaryotic ubiquitin-like protein]-gamma-L-glutamyl)-[protein]-L-lysine.</text>
        <dbReference type="EC" id="6.3.1.19"/>
    </reaction>
</comment>
<comment type="pathway">
    <text evidence="1">Protein degradation; proteasomal Pup-dependent pathway.</text>
</comment>
<comment type="pathway">
    <text evidence="1">Protein modification; protein pupylation.</text>
</comment>
<comment type="miscellaneous">
    <text evidence="1">The reaction mechanism probably proceeds via the activation of Pup by phosphorylation of its C-terminal glutamate, which is then subject to nucleophilic attack by the substrate lysine, resulting in an isopeptide bond and the release of phosphate as a good leaving group.</text>
</comment>
<comment type="similarity">
    <text evidence="1">Belongs to the Pup ligase/Pup deamidase family. Pup-conjugating enzyme subfamily.</text>
</comment>
<comment type="sequence caution" evidence="2">
    <conflict type="erroneous initiation">
        <sequence resource="EMBL-CDS" id="ABN98288"/>
    </conflict>
    <text>Truncated N-terminus.</text>
</comment>
<organism>
    <name type="scientific">Mycobacterium sp. (strain JLS)</name>
    <dbReference type="NCBI Taxonomy" id="164757"/>
    <lineage>
        <taxon>Bacteria</taxon>
        <taxon>Bacillati</taxon>
        <taxon>Actinomycetota</taxon>
        <taxon>Actinomycetes</taxon>
        <taxon>Mycobacteriales</taxon>
        <taxon>Mycobacteriaceae</taxon>
        <taxon>Mycobacterium</taxon>
    </lineage>
</organism>
<accession>A3PZG1</accession>
<feature type="chain" id="PRO_0000395932" description="Pup--protein ligase">
    <location>
        <begin position="1"/>
        <end position="452"/>
    </location>
</feature>
<feature type="active site" description="Proton acceptor" evidence="1">
    <location>
        <position position="57"/>
    </location>
</feature>
<feature type="binding site" evidence="1">
    <location>
        <position position="9"/>
    </location>
    <ligand>
        <name>Mg(2+)</name>
        <dbReference type="ChEBI" id="CHEBI:18420"/>
    </ligand>
</feature>
<feature type="binding site" evidence="1">
    <location>
        <position position="53"/>
    </location>
    <ligand>
        <name>ATP</name>
        <dbReference type="ChEBI" id="CHEBI:30616"/>
    </ligand>
</feature>
<feature type="binding site" evidence="1">
    <location>
        <position position="55"/>
    </location>
    <ligand>
        <name>Mg(2+)</name>
        <dbReference type="ChEBI" id="CHEBI:18420"/>
    </ligand>
</feature>
<feature type="binding site" evidence="1">
    <location>
        <position position="63"/>
    </location>
    <ligand>
        <name>Mg(2+)</name>
        <dbReference type="ChEBI" id="CHEBI:18420"/>
    </ligand>
</feature>
<feature type="binding site" evidence="1">
    <location>
        <position position="66"/>
    </location>
    <ligand>
        <name>ATP</name>
        <dbReference type="ChEBI" id="CHEBI:30616"/>
    </ligand>
</feature>
<feature type="binding site" evidence="1">
    <location>
        <position position="419"/>
    </location>
    <ligand>
        <name>ATP</name>
        <dbReference type="ChEBI" id="CHEBI:30616"/>
    </ligand>
</feature>
<gene>
    <name evidence="1" type="primary">pafA</name>
    <name type="ordered locus">Mjls_2504</name>
</gene>
<name>PAFA_MYCSJ</name>
<proteinExistence type="inferred from homology"/>